<comment type="function">
    <text evidence="2">Catalyzes the decarboxylation of L-aspartate to produce beta-alanine. In vitro, can also catalyze the decarboxylation of L-glutamate to produce 4-aminobutanoate, but this activity does not seem necessary in vivo. Shows much higher activity with L-aspartate than with L-glutamate. Does not decarboxylate L-tyrosine.</text>
</comment>
<comment type="catalytic activity">
    <reaction evidence="1 2">
        <text>L-aspartate + H(+) = beta-alanine + CO2</text>
        <dbReference type="Rhea" id="RHEA:19497"/>
        <dbReference type="ChEBI" id="CHEBI:15378"/>
        <dbReference type="ChEBI" id="CHEBI:16526"/>
        <dbReference type="ChEBI" id="CHEBI:29991"/>
        <dbReference type="ChEBI" id="CHEBI:57966"/>
        <dbReference type="EC" id="4.1.1.11"/>
    </reaction>
</comment>
<comment type="cofactor">
    <cofactor evidence="1 2">
        <name>pyridoxal 5'-phosphate</name>
        <dbReference type="ChEBI" id="CHEBI:597326"/>
    </cofactor>
</comment>
<comment type="activity regulation">
    <text evidence="2">Inhibited by hydroxylamine.</text>
</comment>
<comment type="biophysicochemical properties">
    <kinetics>
        <KM evidence="2">0.47 mM for aspartate</KM>
        <KM evidence="2">1.92 mM for glutamate</KM>
        <Vmax evidence="2">1.13 umol/min/mg enzyme with aspartate as substrate</Vmax>
        <Vmax evidence="2">0.26 umol/min/mg enzyme with glutamate as substrate</Vmax>
        <text evidence="2">kcat is 0.80 sec(-1) with aspartate as substrate. kcat is 0.18 sec(-1) with glutamate as substrate.</text>
    </kinetics>
    <phDependence>
        <text evidence="2">Optimum pH is 8.0.</text>
    </phDependence>
    <temperatureDependence>
        <text evidence="2">Optimum temperature is 85 degrees Celsius.</text>
    </temperatureDependence>
</comment>
<comment type="pathway">
    <text evidence="1 2">Cofactor biosynthesis; coenzyme A biosynthesis.</text>
</comment>
<comment type="subunit">
    <text evidence="2">Homodimer. Can also form homohexamers.</text>
</comment>
<comment type="disruption phenotype">
    <text evidence="2">No growth on standard medium. Growth can be restored by the addition of exogenous beta-alanine or coenzyme A, but not by the addition of GABA.</text>
</comment>
<comment type="similarity">
    <text evidence="1">Belongs to the group II decarboxylase family. MfnA subfamily.</text>
</comment>
<feature type="chain" id="PRO_0000147031" description="L-aspartate decarboxylase">
    <location>
        <begin position="1"/>
        <end position="384"/>
    </location>
</feature>
<feature type="modified residue" description="N6-(pyridoxal phosphate)lysine" evidence="1">
    <location>
        <position position="231"/>
    </location>
</feature>
<reference key="1">
    <citation type="journal article" date="2005" name="Genome Res.">
        <title>Complete genome sequence of the hyperthermophilic archaeon Thermococcus kodakaraensis KOD1 and comparison with Pyrococcus genomes.</title>
        <authorList>
            <person name="Fukui T."/>
            <person name="Atomi H."/>
            <person name="Kanai T."/>
            <person name="Matsumi R."/>
            <person name="Fujiwara S."/>
            <person name="Imanaka T."/>
        </authorList>
    </citation>
    <scope>NUCLEOTIDE SEQUENCE [LARGE SCALE GENOMIC DNA]</scope>
    <source>
        <strain>ATCC BAA-918 / JCM 12380 / KOD1</strain>
    </source>
</reference>
<reference key="2">
    <citation type="journal article" date="2014" name="J. Bacteriol.">
        <title>An archaeal glutamate decarboxylase homolog functions as an aspartate decarboxylase and is involved in beta-alanine and coenzyme A biosynthesis.</title>
        <authorList>
            <person name="Tomita H."/>
            <person name="Yokooji Y."/>
            <person name="Ishibashi T."/>
            <person name="Imanaka T."/>
            <person name="Atomi H."/>
        </authorList>
    </citation>
    <scope>FUNCTION</scope>
    <scope>CATALYTIC ACTIVITY</scope>
    <scope>COFACTOR</scope>
    <scope>ACTIVITY REGULATION</scope>
    <scope>BIOPHYSICOCHEMICAL PROPERTIES</scope>
    <scope>PATHWAY</scope>
    <scope>SUBUNIT</scope>
    <scope>DISRUPTION PHENOTYPE</scope>
    <source>
        <strain>ATCC BAA-918 / JCM 12380 / KOD1</strain>
    </source>
</reference>
<organism>
    <name type="scientific">Thermococcus kodakarensis (strain ATCC BAA-918 / JCM 12380 / KOD1)</name>
    <name type="common">Pyrococcus kodakaraensis (strain KOD1)</name>
    <dbReference type="NCBI Taxonomy" id="69014"/>
    <lineage>
        <taxon>Archaea</taxon>
        <taxon>Methanobacteriati</taxon>
        <taxon>Methanobacteriota</taxon>
        <taxon>Thermococci</taxon>
        <taxon>Thermococcales</taxon>
        <taxon>Thermococcaceae</taxon>
        <taxon>Thermococcus</taxon>
    </lineage>
</organism>
<keyword id="KW-0210">Decarboxylase</keyword>
<keyword id="KW-0456">Lyase</keyword>
<keyword id="KW-0663">Pyridoxal phosphate</keyword>
<keyword id="KW-1185">Reference proteome</keyword>
<protein>
    <recommendedName>
        <fullName evidence="3">L-aspartate decarboxylase</fullName>
        <shortName evidence="1 3">ADC</shortName>
        <ecNumber evidence="1 2">4.1.1.11</ecNumber>
    </recommendedName>
</protein>
<gene>
    <name evidence="1" type="primary">mfnA</name>
    <name type="ordered locus">TK1814</name>
</gene>
<name>MFNA_THEKO</name>
<proteinExistence type="evidence at protein level"/>
<evidence type="ECO:0000255" key="1">
    <source>
        <dbReference type="HAMAP-Rule" id="MF_01610"/>
    </source>
</evidence>
<evidence type="ECO:0000269" key="2">
    <source>
    </source>
</evidence>
<evidence type="ECO:0000305" key="3"/>
<dbReference type="EC" id="4.1.1.11" evidence="1 2"/>
<dbReference type="EMBL" id="AP006878">
    <property type="protein sequence ID" value="BAD86003.1"/>
    <property type="molecule type" value="Genomic_DNA"/>
</dbReference>
<dbReference type="RefSeq" id="WP_011250765.1">
    <property type="nucleotide sequence ID" value="NC_006624.1"/>
</dbReference>
<dbReference type="SMR" id="Q5JJ82"/>
<dbReference type="FunCoup" id="Q5JJ82">
    <property type="interactions" value="133"/>
</dbReference>
<dbReference type="STRING" id="69014.TK1814"/>
<dbReference type="EnsemblBacteria" id="BAD86003">
    <property type="protein sequence ID" value="BAD86003"/>
    <property type="gene ID" value="TK1814"/>
</dbReference>
<dbReference type="GeneID" id="78448345"/>
<dbReference type="KEGG" id="tko:TK1814"/>
<dbReference type="PATRIC" id="fig|69014.16.peg.1770"/>
<dbReference type="eggNOG" id="arCOG00027">
    <property type="taxonomic scope" value="Archaea"/>
</dbReference>
<dbReference type="HOGENOM" id="CLU_028929_2_1_2"/>
<dbReference type="InParanoid" id="Q5JJ82"/>
<dbReference type="OrthoDB" id="56891at2157"/>
<dbReference type="PhylomeDB" id="Q5JJ82"/>
<dbReference type="BRENDA" id="4.1.1.11">
    <property type="organism ID" value="5246"/>
</dbReference>
<dbReference type="UniPathway" id="UPA00241"/>
<dbReference type="Proteomes" id="UP000000536">
    <property type="component" value="Chromosome"/>
</dbReference>
<dbReference type="GO" id="GO:0004068">
    <property type="term" value="F:aspartate 1-decarboxylase activity"/>
    <property type="evidence" value="ECO:0000314"/>
    <property type="project" value="UniProtKB"/>
</dbReference>
<dbReference type="GO" id="GO:0030170">
    <property type="term" value="F:pyridoxal phosphate binding"/>
    <property type="evidence" value="ECO:0000314"/>
    <property type="project" value="UniProtKB"/>
</dbReference>
<dbReference type="GO" id="GO:0019752">
    <property type="term" value="P:carboxylic acid metabolic process"/>
    <property type="evidence" value="ECO:0007669"/>
    <property type="project" value="InterPro"/>
</dbReference>
<dbReference type="GO" id="GO:0015937">
    <property type="term" value="P:coenzyme A biosynthetic process"/>
    <property type="evidence" value="ECO:0000315"/>
    <property type="project" value="UniProtKB"/>
</dbReference>
<dbReference type="FunFam" id="3.40.640.10:FF:000125">
    <property type="entry name" value="Probable L-tyrosine/L-aspartate decarboxylase"/>
    <property type="match status" value="1"/>
</dbReference>
<dbReference type="Gene3D" id="3.90.1150.10">
    <property type="entry name" value="Aspartate Aminotransferase, domain 1"/>
    <property type="match status" value="1"/>
</dbReference>
<dbReference type="Gene3D" id="3.40.640.10">
    <property type="entry name" value="Type I PLP-dependent aspartate aminotransferase-like (Major domain)"/>
    <property type="match status" value="1"/>
</dbReference>
<dbReference type="HAMAP" id="MF_01610">
    <property type="entry name" value="MfnA_decarbox"/>
    <property type="match status" value="1"/>
</dbReference>
<dbReference type="InterPro" id="IPR050477">
    <property type="entry name" value="GrpII_AminoAcid_Decarb"/>
</dbReference>
<dbReference type="InterPro" id="IPR020931">
    <property type="entry name" value="MfnA"/>
</dbReference>
<dbReference type="InterPro" id="IPR002129">
    <property type="entry name" value="PyrdxlP-dep_de-COase"/>
</dbReference>
<dbReference type="InterPro" id="IPR015424">
    <property type="entry name" value="PyrdxlP-dep_Trfase"/>
</dbReference>
<dbReference type="InterPro" id="IPR015421">
    <property type="entry name" value="PyrdxlP-dep_Trfase_major"/>
</dbReference>
<dbReference type="InterPro" id="IPR015422">
    <property type="entry name" value="PyrdxlP-dep_Trfase_small"/>
</dbReference>
<dbReference type="InterPro" id="IPR021115">
    <property type="entry name" value="Pyridoxal-P_BS"/>
</dbReference>
<dbReference type="NCBIfam" id="TIGR03812">
    <property type="entry name" value="tyr_de_CO2_Arch"/>
    <property type="match status" value="1"/>
</dbReference>
<dbReference type="PANTHER" id="PTHR42735">
    <property type="match status" value="1"/>
</dbReference>
<dbReference type="PANTHER" id="PTHR42735:SF6">
    <property type="entry name" value="SPHINGOSINE-1-PHOSPHATE LYASE 1"/>
    <property type="match status" value="1"/>
</dbReference>
<dbReference type="Pfam" id="PF00282">
    <property type="entry name" value="Pyridoxal_deC"/>
    <property type="match status" value="1"/>
</dbReference>
<dbReference type="SUPFAM" id="SSF53383">
    <property type="entry name" value="PLP-dependent transferases"/>
    <property type="match status" value="1"/>
</dbReference>
<dbReference type="PROSITE" id="PS00392">
    <property type="entry name" value="DDC_GAD_HDC_YDC"/>
    <property type="match status" value="1"/>
</dbReference>
<accession>Q5JJ82</accession>
<sequence length="384" mass="42545">MFPERGASEEEVLRELEEKTREDLTFDSGKILGSMCTYPHPFAVKVVMKYIDRNLGDPGLHIGSQKIEKEAVDMLANLLGLEKGYGHIVSGGTEANILAVRAMRNLAGIEKPELILPESAHFSFIKAAEMLGVKLVWAELNDDYTVNVKDVEKKITDRTIGIVGIAGTTGLGVVDDIPALSDLALDYGLPLHVDAAFGGFVIPFAKALGYEIPDFDFRLKGVKSITIDPHKMGMVPIPAGGIIFREKKFLDSISVLAPYLAGGKIWQATITGTRPGANALAVWAMIKHLGFDGYKEVVKEKMELARWFASELKKIPGIYLIREPVLNIVSFGSEKLEELEKELKARGWGVSAHRGYIRIVVMPHVKREHLEEFLRDLREIAKRL</sequence>